<protein>
    <recommendedName>
        <fullName>Zinc finger and BTB domain-containing protein 47</fullName>
    </recommendedName>
    <alternativeName>
        <fullName>Zinc finger protein 651</fullName>
    </alternativeName>
</protein>
<feature type="chain" id="PRO_0000251896" description="Zinc finger and BTB domain-containing protein 47">
    <location>
        <begin position="1"/>
        <end position="747"/>
    </location>
</feature>
<feature type="domain" description="BTB" evidence="1">
    <location>
        <begin position="15"/>
        <end position="83"/>
    </location>
</feature>
<feature type="zinc finger region" description="C2H2-type 1" evidence="2">
    <location>
        <begin position="436"/>
        <end position="459"/>
    </location>
</feature>
<feature type="zinc finger region" description="C2H2-type 2; degenerate" evidence="2">
    <location>
        <begin position="463"/>
        <end position="485"/>
    </location>
</feature>
<feature type="zinc finger region" description="C2H2-type 3" evidence="2">
    <location>
        <begin position="490"/>
        <end position="513"/>
    </location>
</feature>
<feature type="zinc finger region" description="C2H2-type 4" evidence="2">
    <location>
        <begin position="520"/>
        <end position="542"/>
    </location>
</feature>
<feature type="zinc finger region" description="C2H2-type 5" evidence="2">
    <location>
        <begin position="548"/>
        <end position="570"/>
    </location>
</feature>
<feature type="zinc finger region" description="C2H2-type 6" evidence="2">
    <location>
        <begin position="576"/>
        <end position="598"/>
    </location>
</feature>
<feature type="zinc finger region" description="C2H2-type 7" evidence="2">
    <location>
        <begin position="604"/>
        <end position="626"/>
    </location>
</feature>
<feature type="zinc finger region" description="C2H2-type 8" evidence="2">
    <location>
        <begin position="632"/>
        <end position="654"/>
    </location>
</feature>
<feature type="zinc finger region" description="C2H2-type 9" evidence="2">
    <location>
        <begin position="660"/>
        <end position="687"/>
    </location>
</feature>
<feature type="region of interest" description="Disordered" evidence="3">
    <location>
        <begin position="243"/>
        <end position="424"/>
    </location>
</feature>
<feature type="region of interest" description="Disordered" evidence="3">
    <location>
        <begin position="694"/>
        <end position="747"/>
    </location>
</feature>
<feature type="compositionally biased region" description="Basic and acidic residues" evidence="3">
    <location>
        <begin position="267"/>
        <end position="277"/>
    </location>
</feature>
<feature type="compositionally biased region" description="Acidic residues" evidence="3">
    <location>
        <begin position="278"/>
        <end position="354"/>
    </location>
</feature>
<feature type="compositionally biased region" description="Basic and acidic residues" evidence="3">
    <location>
        <begin position="380"/>
        <end position="398"/>
    </location>
</feature>
<feature type="compositionally biased region" description="Pro residues" evidence="3">
    <location>
        <begin position="719"/>
        <end position="733"/>
    </location>
</feature>
<feature type="cross-link" description="Glycyl lysine isopeptide (Lys-Gly) (interchain with G-Cter in SUMO2)" evidence="6">
    <location>
        <position position="190"/>
    </location>
</feature>
<feature type="splice variant" id="VSP_054051" description="In isoform 2." evidence="4">
    <location>
        <begin position="330"/>
        <end position="430"/>
    </location>
</feature>
<feature type="sequence variant" id="VAR_027715" description="In dbSNP:rs9878239.">
    <original>A</original>
    <variation>T</variation>
    <location>
        <position position="385"/>
    </location>
</feature>
<feature type="sequence conflict" description="In Ref. 1; BAC86810." evidence="5" ref="1">
    <original>P</original>
    <variation>R</variation>
    <location>
        <position position="160"/>
    </location>
</feature>
<feature type="sequence conflict" description="In Ref. 1; BAC86810." evidence="5" ref="1">
    <original>L</original>
    <variation>P</variation>
    <location>
        <position position="272"/>
    </location>
</feature>
<feature type="sequence conflict" description="In Ref. 1; BAC86810." evidence="5" ref="1">
    <original>D</original>
    <variation>G</variation>
    <location>
        <position position="282"/>
    </location>
</feature>
<feature type="sequence conflict" description="In Ref. 1; BAC86810." evidence="5" ref="1">
    <location>
        <position position="301"/>
    </location>
</feature>
<dbReference type="EMBL" id="AK127065">
    <property type="protein sequence ID" value="BAC86810.1"/>
    <property type="molecule type" value="mRNA"/>
</dbReference>
<dbReference type="EMBL" id="AC006059">
    <property type="status" value="NOT_ANNOTATED_CDS"/>
    <property type="molecule type" value="Genomic_DNA"/>
</dbReference>
<dbReference type="EMBL" id="AL133062">
    <property type="protein sequence ID" value="CAB61386.2"/>
    <property type="status" value="ALT_INIT"/>
    <property type="molecule type" value="mRNA"/>
</dbReference>
<dbReference type="EMBL" id="BC021855">
    <property type="protein sequence ID" value="AAH21855.1"/>
    <property type="status" value="ALT_INIT"/>
    <property type="molecule type" value="mRNA"/>
</dbReference>
<dbReference type="EMBL" id="AB033016">
    <property type="protein sequence ID" value="BAA86504.1"/>
    <property type="molecule type" value="mRNA"/>
</dbReference>
<dbReference type="CCDS" id="CCDS46805.2">
    <molecule id="Q9UFB7-1"/>
</dbReference>
<dbReference type="PIR" id="T42663">
    <property type="entry name" value="T42663"/>
</dbReference>
<dbReference type="RefSeq" id="NP_660149.2">
    <molecule id="Q9UFB7-1"/>
    <property type="nucleotide sequence ID" value="NM_145166.4"/>
</dbReference>
<dbReference type="SMR" id="Q9UFB7"/>
<dbReference type="BioGRID" id="124993">
    <property type="interactions" value="301"/>
</dbReference>
<dbReference type="FunCoup" id="Q9UFB7">
    <property type="interactions" value="1136"/>
</dbReference>
<dbReference type="IntAct" id="Q9UFB7">
    <property type="interactions" value="136"/>
</dbReference>
<dbReference type="MINT" id="Q9UFB7"/>
<dbReference type="STRING" id="9606.ENSP00000232974"/>
<dbReference type="GlyGen" id="Q9UFB7">
    <property type="glycosylation" value="1 site, 1 O-linked glycan (1 site)"/>
</dbReference>
<dbReference type="iPTMnet" id="Q9UFB7"/>
<dbReference type="PhosphoSitePlus" id="Q9UFB7"/>
<dbReference type="BioMuta" id="ZBTB47"/>
<dbReference type="DMDM" id="74761930"/>
<dbReference type="jPOST" id="Q9UFB7"/>
<dbReference type="MassIVE" id="Q9UFB7"/>
<dbReference type="PaxDb" id="9606-ENSP00000232974"/>
<dbReference type="PeptideAtlas" id="Q9UFB7"/>
<dbReference type="ProteomicsDB" id="43241"/>
<dbReference type="ProteomicsDB" id="84176">
    <molecule id="Q9UFB7-1"/>
</dbReference>
<dbReference type="Antibodypedia" id="29276">
    <property type="antibodies" value="73 antibodies from 14 providers"/>
</dbReference>
<dbReference type="DNASU" id="92999"/>
<dbReference type="Ensembl" id="ENST00000232974.11">
    <molecule id="Q9UFB7-1"/>
    <property type="protein sequence ID" value="ENSP00000232974.6"/>
    <property type="gene ID" value="ENSG00000114853.15"/>
</dbReference>
<dbReference type="GeneID" id="92999"/>
<dbReference type="KEGG" id="hsa:92999"/>
<dbReference type="MANE-Select" id="ENST00000232974.11">
    <property type="protein sequence ID" value="ENSP00000232974.6"/>
    <property type="RefSeq nucleotide sequence ID" value="NM_145166.4"/>
    <property type="RefSeq protein sequence ID" value="NP_660149.2"/>
</dbReference>
<dbReference type="UCSC" id="uc003clu.3">
    <molecule id="Q9UFB7-1"/>
    <property type="organism name" value="human"/>
</dbReference>
<dbReference type="AGR" id="HGNC:26955"/>
<dbReference type="CTD" id="92999"/>
<dbReference type="DisGeNET" id="92999"/>
<dbReference type="GeneCards" id="ZBTB47"/>
<dbReference type="HGNC" id="HGNC:26955">
    <property type="gene designation" value="ZBTB47"/>
</dbReference>
<dbReference type="HPA" id="ENSG00000114853">
    <property type="expression patterns" value="Tissue enhanced (skeletal)"/>
</dbReference>
<dbReference type="MalaCards" id="ZBTB47"/>
<dbReference type="MIM" id="619969">
    <property type="type" value="gene"/>
</dbReference>
<dbReference type="neXtProt" id="NX_Q9UFB7"/>
<dbReference type="OpenTargets" id="ENSG00000114853"/>
<dbReference type="PharmGKB" id="PA162409466"/>
<dbReference type="VEuPathDB" id="HostDB:ENSG00000114853"/>
<dbReference type="eggNOG" id="KOG1721">
    <property type="taxonomic scope" value="Eukaryota"/>
</dbReference>
<dbReference type="GeneTree" id="ENSGT00940000160089"/>
<dbReference type="HOGENOM" id="CLU_002678_74_2_1"/>
<dbReference type="InParanoid" id="Q9UFB7"/>
<dbReference type="OMA" id="PFRCEWC"/>
<dbReference type="OrthoDB" id="7327383at2759"/>
<dbReference type="PAN-GO" id="Q9UFB7">
    <property type="GO annotations" value="4 GO annotations based on evolutionary models"/>
</dbReference>
<dbReference type="PhylomeDB" id="Q9UFB7"/>
<dbReference type="TreeFam" id="TF332655"/>
<dbReference type="PathwayCommons" id="Q9UFB7"/>
<dbReference type="SignaLink" id="Q9UFB7"/>
<dbReference type="SIGNOR" id="Q9UFB7"/>
<dbReference type="BioGRID-ORCS" id="92999">
    <property type="hits" value="20 hits in 1204 CRISPR screens"/>
</dbReference>
<dbReference type="ChiTaRS" id="ZBTB47">
    <property type="organism name" value="human"/>
</dbReference>
<dbReference type="GenomeRNAi" id="92999"/>
<dbReference type="Pharos" id="Q9UFB7">
    <property type="development level" value="Tdark"/>
</dbReference>
<dbReference type="PRO" id="PR:Q9UFB7"/>
<dbReference type="Proteomes" id="UP000005640">
    <property type="component" value="Chromosome 3"/>
</dbReference>
<dbReference type="RNAct" id="Q9UFB7">
    <property type="molecule type" value="protein"/>
</dbReference>
<dbReference type="Bgee" id="ENSG00000114853">
    <property type="expression patterns" value="Expressed in left ventricle myocardium and 175 other cell types or tissues"/>
</dbReference>
<dbReference type="ExpressionAtlas" id="Q9UFB7">
    <property type="expression patterns" value="baseline and differential"/>
</dbReference>
<dbReference type="GO" id="GO:0005634">
    <property type="term" value="C:nucleus"/>
    <property type="evidence" value="ECO:0000318"/>
    <property type="project" value="GO_Central"/>
</dbReference>
<dbReference type="GO" id="GO:0003677">
    <property type="term" value="F:DNA binding"/>
    <property type="evidence" value="ECO:0007669"/>
    <property type="project" value="UniProtKB-KW"/>
</dbReference>
<dbReference type="GO" id="GO:0000981">
    <property type="term" value="F:DNA-binding transcription factor activity, RNA polymerase II-specific"/>
    <property type="evidence" value="ECO:0000318"/>
    <property type="project" value="GO_Central"/>
</dbReference>
<dbReference type="GO" id="GO:0008270">
    <property type="term" value="F:zinc ion binding"/>
    <property type="evidence" value="ECO:0007669"/>
    <property type="project" value="UniProtKB-KW"/>
</dbReference>
<dbReference type="GO" id="GO:0006357">
    <property type="term" value="P:regulation of transcription by RNA polymerase II"/>
    <property type="evidence" value="ECO:0000318"/>
    <property type="project" value="GO_Central"/>
</dbReference>
<dbReference type="CDD" id="cd18231">
    <property type="entry name" value="BTB_POZ_ZBTB47_ZNF651"/>
    <property type="match status" value="1"/>
</dbReference>
<dbReference type="FunFam" id="3.30.160.60:FF:000900">
    <property type="entry name" value="Zinc finger and BTB domain containing 47"/>
    <property type="match status" value="1"/>
</dbReference>
<dbReference type="FunFam" id="3.30.160.60:FF:001295">
    <property type="entry name" value="Zinc finger and BTB domain containing 47"/>
    <property type="match status" value="1"/>
</dbReference>
<dbReference type="FunFam" id="3.30.710.10:FF:000100">
    <property type="entry name" value="Zinc finger and BTB domain containing 47"/>
    <property type="match status" value="1"/>
</dbReference>
<dbReference type="FunFam" id="3.30.160.60:FF:000312">
    <property type="entry name" value="Zinc finger and BTB domain-containing 47"/>
    <property type="match status" value="1"/>
</dbReference>
<dbReference type="FunFam" id="3.30.160.60:FF:000550">
    <property type="entry name" value="Zinc finger and BTB domain-containing 47"/>
    <property type="match status" value="1"/>
</dbReference>
<dbReference type="FunFam" id="3.30.160.60:FF:000166">
    <property type="entry name" value="Zinc finger and BTB domain-containing 49"/>
    <property type="match status" value="1"/>
</dbReference>
<dbReference type="FunFam" id="3.30.160.60:FF:001300">
    <property type="entry name" value="Zinc finger and BTB domain-containing protein 47"/>
    <property type="match status" value="1"/>
</dbReference>
<dbReference type="FunFam" id="3.30.160.60:FF:000284">
    <property type="entry name" value="Zinc finger protein 652 isoform X1"/>
    <property type="match status" value="1"/>
</dbReference>
<dbReference type="Gene3D" id="3.30.160.60">
    <property type="entry name" value="Classic Zinc Finger"/>
    <property type="match status" value="7"/>
</dbReference>
<dbReference type="Gene3D" id="3.30.710.10">
    <property type="entry name" value="Potassium Channel Kv1.1, Chain A"/>
    <property type="match status" value="1"/>
</dbReference>
<dbReference type="InterPro" id="IPR000210">
    <property type="entry name" value="BTB/POZ_dom"/>
</dbReference>
<dbReference type="InterPro" id="IPR011333">
    <property type="entry name" value="SKP1/BTB/POZ_sf"/>
</dbReference>
<dbReference type="InterPro" id="IPR049524">
    <property type="entry name" value="ZBTB47_BTB_POZ"/>
</dbReference>
<dbReference type="InterPro" id="IPR036236">
    <property type="entry name" value="Znf_C2H2_sf"/>
</dbReference>
<dbReference type="InterPro" id="IPR013087">
    <property type="entry name" value="Znf_C2H2_type"/>
</dbReference>
<dbReference type="PANTHER" id="PTHR24394:SF24">
    <property type="entry name" value="ZINC FINGER AND BTB DOMAIN-CONTAINING PROTEIN 47"/>
    <property type="match status" value="1"/>
</dbReference>
<dbReference type="PANTHER" id="PTHR24394">
    <property type="entry name" value="ZINC FINGER PROTEIN"/>
    <property type="match status" value="1"/>
</dbReference>
<dbReference type="Pfam" id="PF00651">
    <property type="entry name" value="BTB"/>
    <property type="match status" value="1"/>
</dbReference>
<dbReference type="Pfam" id="PF00096">
    <property type="entry name" value="zf-C2H2"/>
    <property type="match status" value="5"/>
</dbReference>
<dbReference type="SMART" id="SM00225">
    <property type="entry name" value="BTB"/>
    <property type="match status" value="1"/>
</dbReference>
<dbReference type="SMART" id="SM00355">
    <property type="entry name" value="ZnF_C2H2"/>
    <property type="match status" value="9"/>
</dbReference>
<dbReference type="SUPFAM" id="SSF57667">
    <property type="entry name" value="beta-beta-alpha zinc fingers"/>
    <property type="match status" value="5"/>
</dbReference>
<dbReference type="SUPFAM" id="SSF54695">
    <property type="entry name" value="POZ domain"/>
    <property type="match status" value="1"/>
</dbReference>
<dbReference type="PROSITE" id="PS50097">
    <property type="entry name" value="BTB"/>
    <property type="match status" value="1"/>
</dbReference>
<dbReference type="PROSITE" id="PS00028">
    <property type="entry name" value="ZINC_FINGER_C2H2_1"/>
    <property type="match status" value="7"/>
</dbReference>
<dbReference type="PROSITE" id="PS50157">
    <property type="entry name" value="ZINC_FINGER_C2H2_2"/>
    <property type="match status" value="8"/>
</dbReference>
<accession>Q9UFB7</accession>
<accession>H7BXD3</accession>
<accession>Q6ZSY6</accession>
<accession>Q8WTY8</accession>
<accession>Q9ULN0</accession>
<organism>
    <name type="scientific">Homo sapiens</name>
    <name type="common">Human</name>
    <dbReference type="NCBI Taxonomy" id="9606"/>
    <lineage>
        <taxon>Eukaryota</taxon>
        <taxon>Metazoa</taxon>
        <taxon>Chordata</taxon>
        <taxon>Craniata</taxon>
        <taxon>Vertebrata</taxon>
        <taxon>Euteleostomi</taxon>
        <taxon>Mammalia</taxon>
        <taxon>Eutheria</taxon>
        <taxon>Euarchontoglires</taxon>
        <taxon>Primates</taxon>
        <taxon>Haplorrhini</taxon>
        <taxon>Catarrhini</taxon>
        <taxon>Hominidae</taxon>
        <taxon>Homo</taxon>
    </lineage>
</organism>
<comment type="function">
    <text>May be involved in transcriptional regulation.</text>
</comment>
<comment type="interaction">
    <interactant intactId="EBI-7781767">
        <id>Q9UFB7</id>
    </interactant>
    <interactant intactId="EBI-739624">
        <id>Q8NHQ1</id>
        <label>CEP70</label>
    </interactant>
    <organismsDiffer>false</organismsDiffer>
    <experiments>3</experiments>
</comment>
<comment type="interaction">
    <interactant intactId="EBI-7781767">
        <id>Q9UFB7</id>
    </interactant>
    <interactant intactId="EBI-739789">
        <id>Q92997</id>
        <label>DVL3</label>
    </interactant>
    <organismsDiffer>false</organismsDiffer>
    <experiments>3</experiments>
</comment>
<comment type="interaction">
    <interactant intactId="EBI-7781767">
        <id>Q9UFB7</id>
    </interactant>
    <interactant intactId="EBI-746704">
        <id>Q9UJC3</id>
        <label>HOOK1</label>
    </interactant>
    <organismsDiffer>false</organismsDiffer>
    <experiments>3</experiments>
</comment>
<comment type="interaction">
    <interactant intactId="EBI-7781767">
        <id>Q9UFB7</id>
    </interactant>
    <interactant intactId="EBI-10961706">
        <id>Q96ED9-2</id>
        <label>HOOK2</label>
    </interactant>
    <organismsDiffer>false</organismsDiffer>
    <experiments>3</experiments>
</comment>
<comment type="interaction">
    <interactant intactId="EBI-7781767">
        <id>Q9UFB7</id>
    </interactant>
    <interactant intactId="EBI-11522433">
        <id>Q5JR59-3</id>
        <label>MTUS2</label>
    </interactant>
    <organismsDiffer>false</organismsDiffer>
    <experiments>3</experiments>
</comment>
<comment type="interaction">
    <interactant intactId="EBI-7781767">
        <id>Q9UFB7</id>
    </interactant>
    <interactant intactId="EBI-10963850">
        <id>Q9NZQ3-3</id>
        <label>NCKIPSD</label>
    </interactant>
    <organismsDiffer>false</organismsDiffer>
    <experiments>3</experiments>
</comment>
<comment type="interaction">
    <interactant intactId="EBI-7781767">
        <id>Q9UFB7</id>
    </interactant>
    <interactant intactId="EBI-11278955">
        <id>Q9UL41</id>
        <label>PNMA3</label>
    </interactant>
    <organismsDiffer>false</organismsDiffer>
    <experiments>3</experiments>
</comment>
<comment type="interaction">
    <interactant intactId="EBI-7781767">
        <id>Q9UFB7</id>
    </interactant>
    <interactant intactId="EBI-11741437">
        <id>Q08117-2</id>
        <label>TLE5</label>
    </interactant>
    <organismsDiffer>false</organismsDiffer>
    <experiments>5</experiments>
</comment>
<comment type="interaction">
    <interactant intactId="EBI-7781767">
        <id>Q9UFB7</id>
    </interactant>
    <interactant intactId="EBI-3921553">
        <id>P17020</id>
        <label>ZNF16</label>
    </interactant>
    <organismsDiffer>false</organismsDiffer>
    <experiments>3</experiments>
</comment>
<comment type="interaction">
    <interactant intactId="EBI-7781767">
        <id>Q9UFB7</id>
    </interactant>
    <interactant intactId="EBI-10211248">
        <id>Q53GI3</id>
        <label>ZNF394</label>
    </interactant>
    <organismsDiffer>false</organismsDiffer>
    <experiments>3</experiments>
</comment>
<comment type="interaction">
    <interactant intactId="EBI-7781767">
        <id>Q9UFB7</id>
    </interactant>
    <interactant intactId="EBI-527853">
        <id>Q9UGI0</id>
        <label>ZRANB1</label>
    </interactant>
    <organismsDiffer>false</organismsDiffer>
    <experiments>3</experiments>
</comment>
<comment type="subcellular location">
    <subcellularLocation>
        <location evidence="5">Nucleus</location>
    </subcellularLocation>
</comment>
<comment type="alternative products">
    <event type="alternative splicing"/>
    <isoform>
        <id>Q9UFB7-1</id>
        <name>1</name>
        <sequence type="displayed"/>
    </isoform>
    <isoform>
        <id>Q9UFB7-2</id>
        <name>2</name>
        <sequence type="described" ref="VSP_054051"/>
    </isoform>
</comment>
<comment type="similarity">
    <text evidence="5">Belongs to the krueppel C2H2-type zinc-finger protein family.</text>
</comment>
<comment type="sequence caution" evidence="5">
    <conflict type="erroneous initiation">
        <sequence resource="EMBL-CDS" id="AAH21855"/>
    </conflict>
    <text>Truncated N-terminus.</text>
</comment>
<comment type="sequence caution" evidence="5">
    <conflict type="erroneous initiation">
        <sequence resource="EMBL-CDS" id="CAB61386"/>
    </conflict>
    <text>Truncated N-terminus.</text>
</comment>
<name>ZBT47_HUMAN</name>
<proteinExistence type="evidence at protein level"/>
<evidence type="ECO:0000255" key="1">
    <source>
        <dbReference type="PROSITE-ProRule" id="PRU00037"/>
    </source>
</evidence>
<evidence type="ECO:0000255" key="2">
    <source>
        <dbReference type="PROSITE-ProRule" id="PRU00042"/>
    </source>
</evidence>
<evidence type="ECO:0000256" key="3">
    <source>
        <dbReference type="SAM" id="MobiDB-lite"/>
    </source>
</evidence>
<evidence type="ECO:0000303" key="4">
    <source>
    </source>
</evidence>
<evidence type="ECO:0000305" key="5"/>
<evidence type="ECO:0007744" key="6">
    <source>
    </source>
</evidence>
<reference key="1">
    <citation type="journal article" date="2004" name="Nat. Genet.">
        <title>Complete sequencing and characterization of 21,243 full-length human cDNAs.</title>
        <authorList>
            <person name="Ota T."/>
            <person name="Suzuki Y."/>
            <person name="Nishikawa T."/>
            <person name="Otsuki T."/>
            <person name="Sugiyama T."/>
            <person name="Irie R."/>
            <person name="Wakamatsu A."/>
            <person name="Hayashi K."/>
            <person name="Sato H."/>
            <person name="Nagai K."/>
            <person name="Kimura K."/>
            <person name="Makita H."/>
            <person name="Sekine M."/>
            <person name="Obayashi M."/>
            <person name="Nishi T."/>
            <person name="Shibahara T."/>
            <person name="Tanaka T."/>
            <person name="Ishii S."/>
            <person name="Yamamoto J."/>
            <person name="Saito K."/>
            <person name="Kawai Y."/>
            <person name="Isono Y."/>
            <person name="Nakamura Y."/>
            <person name="Nagahari K."/>
            <person name="Murakami K."/>
            <person name="Yasuda T."/>
            <person name="Iwayanagi T."/>
            <person name="Wagatsuma M."/>
            <person name="Shiratori A."/>
            <person name="Sudo H."/>
            <person name="Hosoiri T."/>
            <person name="Kaku Y."/>
            <person name="Kodaira H."/>
            <person name="Kondo H."/>
            <person name="Sugawara M."/>
            <person name="Takahashi M."/>
            <person name="Kanda K."/>
            <person name="Yokoi T."/>
            <person name="Furuya T."/>
            <person name="Kikkawa E."/>
            <person name="Omura Y."/>
            <person name="Abe K."/>
            <person name="Kamihara K."/>
            <person name="Katsuta N."/>
            <person name="Sato K."/>
            <person name="Tanikawa M."/>
            <person name="Yamazaki M."/>
            <person name="Ninomiya K."/>
            <person name="Ishibashi T."/>
            <person name="Yamashita H."/>
            <person name="Murakawa K."/>
            <person name="Fujimori K."/>
            <person name="Tanai H."/>
            <person name="Kimata M."/>
            <person name="Watanabe M."/>
            <person name="Hiraoka S."/>
            <person name="Chiba Y."/>
            <person name="Ishida S."/>
            <person name="Ono Y."/>
            <person name="Takiguchi S."/>
            <person name="Watanabe S."/>
            <person name="Yosida M."/>
            <person name="Hotuta T."/>
            <person name="Kusano J."/>
            <person name="Kanehori K."/>
            <person name="Takahashi-Fujii A."/>
            <person name="Hara H."/>
            <person name="Tanase T.-O."/>
            <person name="Nomura Y."/>
            <person name="Togiya S."/>
            <person name="Komai F."/>
            <person name="Hara R."/>
            <person name="Takeuchi K."/>
            <person name="Arita M."/>
            <person name="Imose N."/>
            <person name="Musashino K."/>
            <person name="Yuuki H."/>
            <person name="Oshima A."/>
            <person name="Sasaki N."/>
            <person name="Aotsuka S."/>
            <person name="Yoshikawa Y."/>
            <person name="Matsunawa H."/>
            <person name="Ichihara T."/>
            <person name="Shiohata N."/>
            <person name="Sano S."/>
            <person name="Moriya S."/>
            <person name="Momiyama H."/>
            <person name="Satoh N."/>
            <person name="Takami S."/>
            <person name="Terashima Y."/>
            <person name="Suzuki O."/>
            <person name="Nakagawa S."/>
            <person name="Senoh A."/>
            <person name="Mizoguchi H."/>
            <person name="Goto Y."/>
            <person name="Shimizu F."/>
            <person name="Wakebe H."/>
            <person name="Hishigaki H."/>
            <person name="Watanabe T."/>
            <person name="Sugiyama A."/>
            <person name="Takemoto M."/>
            <person name="Kawakami B."/>
            <person name="Yamazaki M."/>
            <person name="Watanabe K."/>
            <person name="Kumagai A."/>
            <person name="Itakura S."/>
            <person name="Fukuzumi Y."/>
            <person name="Fujimori Y."/>
            <person name="Komiyama M."/>
            <person name="Tashiro H."/>
            <person name="Tanigami A."/>
            <person name="Fujiwara T."/>
            <person name="Ono T."/>
            <person name="Yamada K."/>
            <person name="Fujii Y."/>
            <person name="Ozaki K."/>
            <person name="Hirao M."/>
            <person name="Ohmori Y."/>
            <person name="Kawabata A."/>
            <person name="Hikiji T."/>
            <person name="Kobatake N."/>
            <person name="Inagaki H."/>
            <person name="Ikema Y."/>
            <person name="Okamoto S."/>
            <person name="Okitani R."/>
            <person name="Kawakami T."/>
            <person name="Noguchi S."/>
            <person name="Itoh T."/>
            <person name="Shigeta K."/>
            <person name="Senba T."/>
            <person name="Matsumura K."/>
            <person name="Nakajima Y."/>
            <person name="Mizuno T."/>
            <person name="Morinaga M."/>
            <person name="Sasaki M."/>
            <person name="Togashi T."/>
            <person name="Oyama M."/>
            <person name="Hata H."/>
            <person name="Watanabe M."/>
            <person name="Komatsu T."/>
            <person name="Mizushima-Sugano J."/>
            <person name="Satoh T."/>
            <person name="Shirai Y."/>
            <person name="Takahashi Y."/>
            <person name="Nakagawa K."/>
            <person name="Okumura K."/>
            <person name="Nagase T."/>
            <person name="Nomura N."/>
            <person name="Kikuchi H."/>
            <person name="Masuho Y."/>
            <person name="Yamashita R."/>
            <person name="Nakai K."/>
            <person name="Yada T."/>
            <person name="Nakamura Y."/>
            <person name="Ohara O."/>
            <person name="Isogai T."/>
            <person name="Sugano S."/>
        </authorList>
    </citation>
    <scope>NUCLEOTIDE SEQUENCE [LARGE SCALE MRNA] (ISOFORM 2)</scope>
    <source>
        <tissue>Brain</tissue>
    </source>
</reference>
<reference key="2">
    <citation type="journal article" date="2006" name="Nature">
        <title>The DNA sequence, annotation and analysis of human chromosome 3.</title>
        <authorList>
            <person name="Muzny D.M."/>
            <person name="Scherer S.E."/>
            <person name="Kaul R."/>
            <person name="Wang J."/>
            <person name="Yu J."/>
            <person name="Sudbrak R."/>
            <person name="Buhay C.J."/>
            <person name="Chen R."/>
            <person name="Cree A."/>
            <person name="Ding Y."/>
            <person name="Dugan-Rocha S."/>
            <person name="Gill R."/>
            <person name="Gunaratne P."/>
            <person name="Harris R.A."/>
            <person name="Hawes A.C."/>
            <person name="Hernandez J."/>
            <person name="Hodgson A.V."/>
            <person name="Hume J."/>
            <person name="Jackson A."/>
            <person name="Khan Z.M."/>
            <person name="Kovar-Smith C."/>
            <person name="Lewis L.R."/>
            <person name="Lozado R.J."/>
            <person name="Metzker M.L."/>
            <person name="Milosavljevic A."/>
            <person name="Miner G.R."/>
            <person name="Morgan M.B."/>
            <person name="Nazareth L.V."/>
            <person name="Scott G."/>
            <person name="Sodergren E."/>
            <person name="Song X.-Z."/>
            <person name="Steffen D."/>
            <person name="Wei S."/>
            <person name="Wheeler D.A."/>
            <person name="Wright M.W."/>
            <person name="Worley K.C."/>
            <person name="Yuan Y."/>
            <person name="Zhang Z."/>
            <person name="Adams C.Q."/>
            <person name="Ansari-Lari M.A."/>
            <person name="Ayele M."/>
            <person name="Brown M.J."/>
            <person name="Chen G."/>
            <person name="Chen Z."/>
            <person name="Clendenning J."/>
            <person name="Clerc-Blankenburg K.P."/>
            <person name="Chen R."/>
            <person name="Chen Z."/>
            <person name="Davis C."/>
            <person name="Delgado O."/>
            <person name="Dinh H.H."/>
            <person name="Dong W."/>
            <person name="Draper H."/>
            <person name="Ernst S."/>
            <person name="Fu G."/>
            <person name="Gonzalez-Garay M.L."/>
            <person name="Garcia D.K."/>
            <person name="Gillett W."/>
            <person name="Gu J."/>
            <person name="Hao B."/>
            <person name="Haugen E."/>
            <person name="Havlak P."/>
            <person name="He X."/>
            <person name="Hennig S."/>
            <person name="Hu S."/>
            <person name="Huang W."/>
            <person name="Jackson L.R."/>
            <person name="Jacob L.S."/>
            <person name="Kelly S.H."/>
            <person name="Kube M."/>
            <person name="Levy R."/>
            <person name="Li Z."/>
            <person name="Liu B."/>
            <person name="Liu J."/>
            <person name="Liu W."/>
            <person name="Lu J."/>
            <person name="Maheshwari M."/>
            <person name="Nguyen B.-V."/>
            <person name="Okwuonu G.O."/>
            <person name="Palmeiri A."/>
            <person name="Pasternak S."/>
            <person name="Perez L.M."/>
            <person name="Phelps K.A."/>
            <person name="Plopper F.J."/>
            <person name="Qiang B."/>
            <person name="Raymond C."/>
            <person name="Rodriguez R."/>
            <person name="Saenphimmachak C."/>
            <person name="Santibanez J."/>
            <person name="Shen H."/>
            <person name="Shen Y."/>
            <person name="Subramanian S."/>
            <person name="Tabor P.E."/>
            <person name="Verduzco D."/>
            <person name="Waldron L."/>
            <person name="Wang J."/>
            <person name="Wang J."/>
            <person name="Wang Q."/>
            <person name="Williams G.A."/>
            <person name="Wong G.K.-S."/>
            <person name="Yao Z."/>
            <person name="Zhang J."/>
            <person name="Zhang X."/>
            <person name="Zhao G."/>
            <person name="Zhou J."/>
            <person name="Zhou Y."/>
            <person name="Nelson D."/>
            <person name="Lehrach H."/>
            <person name="Reinhardt R."/>
            <person name="Naylor S.L."/>
            <person name="Yang H."/>
            <person name="Olson M."/>
            <person name="Weinstock G."/>
            <person name="Gibbs R.A."/>
        </authorList>
    </citation>
    <scope>NUCLEOTIDE SEQUENCE [LARGE SCALE GENOMIC DNA]</scope>
</reference>
<reference key="3">
    <citation type="journal article" date="2007" name="BMC Genomics">
        <title>The full-ORF clone resource of the German cDNA consortium.</title>
        <authorList>
            <person name="Bechtel S."/>
            <person name="Rosenfelder H."/>
            <person name="Duda A."/>
            <person name="Schmidt C.P."/>
            <person name="Ernst U."/>
            <person name="Wellenreuther R."/>
            <person name="Mehrle A."/>
            <person name="Schuster C."/>
            <person name="Bahr A."/>
            <person name="Bloecker H."/>
            <person name="Heubner D."/>
            <person name="Hoerlein A."/>
            <person name="Michel G."/>
            <person name="Wedler H."/>
            <person name="Koehrer K."/>
            <person name="Ottenwaelder B."/>
            <person name="Poustka A."/>
            <person name="Wiemann S."/>
            <person name="Schupp I."/>
        </authorList>
    </citation>
    <scope>NUCLEOTIDE SEQUENCE [LARGE SCALE MRNA] OF 343-747 (ISOFORM 1)</scope>
    <source>
        <tissue>Testis</tissue>
    </source>
</reference>
<reference key="4">
    <citation type="journal article" date="2004" name="Genome Res.">
        <title>The status, quality, and expansion of the NIH full-length cDNA project: the Mammalian Gene Collection (MGC).</title>
        <authorList>
            <consortium name="The MGC Project Team"/>
        </authorList>
    </citation>
    <scope>NUCLEOTIDE SEQUENCE [LARGE SCALE MRNA] OF 355-747 (ISOFORM 1)</scope>
    <source>
        <tissue>Brain</tissue>
    </source>
</reference>
<reference key="5">
    <citation type="journal article" date="1999" name="DNA Res.">
        <title>Characterization of cDNA clones selected by the GeneMark analysis from size-fractionated cDNA libraries from human brain.</title>
        <authorList>
            <person name="Hirosawa M."/>
            <person name="Nagase T."/>
            <person name="Ishikawa K."/>
            <person name="Kikuno R."/>
            <person name="Nomura N."/>
            <person name="Ohara O."/>
        </authorList>
    </citation>
    <scope>NUCLEOTIDE SEQUENCE [LARGE SCALE MRNA] OF 574-747 (ISOFORM 1)</scope>
    <source>
        <tissue>Brain</tissue>
    </source>
</reference>
<reference key="6">
    <citation type="journal article" date="2017" name="Nat. Struct. Mol. Biol.">
        <title>Site-specific mapping of the human SUMO proteome reveals co-modification with phosphorylation.</title>
        <authorList>
            <person name="Hendriks I.A."/>
            <person name="Lyon D."/>
            <person name="Young C."/>
            <person name="Jensen L.J."/>
            <person name="Vertegaal A.C."/>
            <person name="Nielsen M.L."/>
        </authorList>
    </citation>
    <scope>SUMOYLATION [LARGE SCALE ANALYSIS] AT LYS-190</scope>
    <scope>IDENTIFICATION BY MASS SPECTROMETRY [LARGE SCALE ANALYSIS]</scope>
</reference>
<gene>
    <name type="primary">ZBTB47</name>
    <name type="synonym">KIAA1190</name>
    <name type="synonym">ZNF651</name>
</gene>
<keyword id="KW-0025">Alternative splicing</keyword>
<keyword id="KW-0238">DNA-binding</keyword>
<keyword id="KW-1017">Isopeptide bond</keyword>
<keyword id="KW-0479">Metal-binding</keyword>
<keyword id="KW-0539">Nucleus</keyword>
<keyword id="KW-1267">Proteomics identification</keyword>
<keyword id="KW-1185">Reference proteome</keyword>
<keyword id="KW-0677">Repeat</keyword>
<keyword id="KW-0804">Transcription</keyword>
<keyword id="KW-0805">Transcription regulation</keyword>
<keyword id="KW-0832">Ubl conjugation</keyword>
<keyword id="KW-0862">Zinc</keyword>
<keyword id="KW-0863">Zinc-finger</keyword>
<sequence length="747" mass="82760">MGRLNEQRLFQPDLCDVDLVLVPQRSVFPAHKGVLAAYSQFFHSLFTQNKQLQRVELSLEALAPGGLQQILNFIYTSKLLVNAANVHEVLSAASLLQMADIAASCQELLDARSLGPPGPGTVALAQPAASCTPAAPPYYCDIKQEADTPGLPKIYAREGPDPYSVRVEDGAGTAGGTVPATIGPAQPFFKEEKEGGVEEAGGPPASLCKLEGGEELEEELGGSGTYSRREQSQIIVEVNLNNQTLHVSTGPEGKPGAGPSPATVVLGREDGLQRHSDEEEEDDEEEEEEEEEEEGGGSGREEEEEEEGGSQGEEEEEEEDGHSEQEEEEEEEEEEGPSEQDQESSEEEEGEEGEAGGKQGPRGSRSSRADPPPHSHMATRSRENARRRGTPEPEEAGRRGGKRPKPPPGVASASARGPPATDGLGAKVKLEEKQHHPCQKCPRVFNNRWYLEKHMNVTHSRMQICDQCGKRFLLESELLLHRQTDCERNIQCVTCGKAFKKLWSLHEHNKIVHGYAEKKFSCEICEKKFYTMAHVRKHMVAHTKDMPFTCETCGKSFKRSMSLKVHSLQHSGEKPFRCENCNERFQYKYQLRSHMSIHIGHKQFMCQWCGKDFNMKQYFDEHMKTHTGEKPYICEICGKSFTSRPNMKRHRRTHTGEKPYPCDVCGQRFRFSNMLKAHKEKCFRVSHTLAGDGVPAAPGLPPTQPQAHALPLLPGLPQTLPPPPHLPPPPPLFPTTASPGGRMNANN</sequence>